<dbReference type="EMBL" id="AB019235">
    <property type="protein sequence ID" value="BAA97193.1"/>
    <property type="molecule type" value="Genomic_DNA"/>
</dbReference>
<dbReference type="EMBL" id="CP002688">
    <property type="protein sequence ID" value="AED97591.1"/>
    <property type="molecule type" value="Genomic_DNA"/>
</dbReference>
<dbReference type="EMBL" id="CP002688">
    <property type="protein sequence ID" value="AED97592.1"/>
    <property type="molecule type" value="Genomic_DNA"/>
</dbReference>
<dbReference type="EMBL" id="AK119007">
    <property type="protein sequence ID" value="BAC43583.1"/>
    <property type="molecule type" value="mRNA"/>
</dbReference>
<dbReference type="EMBL" id="BT005429">
    <property type="protein sequence ID" value="AAO63849.1"/>
    <property type="molecule type" value="mRNA"/>
</dbReference>
<dbReference type="EMBL" id="AY088500">
    <property type="protein sequence ID" value="AAM66035.1"/>
    <property type="molecule type" value="mRNA"/>
</dbReference>
<dbReference type="RefSeq" id="NP_001119478.1">
    <molecule id="Q9LVA7-2"/>
    <property type="nucleotide sequence ID" value="NM_001126006.1"/>
</dbReference>
<dbReference type="RefSeq" id="NP_201035.1">
    <molecule id="Q9LVA7-1"/>
    <property type="nucleotide sequence ID" value="NM_125623.3"/>
</dbReference>
<dbReference type="SMR" id="Q9LVA7"/>
<dbReference type="BioGRID" id="21594">
    <property type="interactions" value="3"/>
</dbReference>
<dbReference type="FunCoup" id="Q9LVA7">
    <property type="interactions" value="2244"/>
</dbReference>
<dbReference type="IntAct" id="Q9LVA7">
    <property type="interactions" value="3"/>
</dbReference>
<dbReference type="STRING" id="3702.Q9LVA7"/>
<dbReference type="TCDB" id="1.A.47.4.1">
    <property type="family name" value="the nucleotide-sensitive anion-selective channel, icln (icln) family"/>
</dbReference>
<dbReference type="iPTMnet" id="Q9LVA7"/>
<dbReference type="PaxDb" id="3702-AT5G62290.1"/>
<dbReference type="ProteomicsDB" id="228760">
    <molecule id="Q9LVA7-1"/>
</dbReference>
<dbReference type="EnsemblPlants" id="AT5G62290.1">
    <molecule id="Q9LVA7-1"/>
    <property type="protein sequence ID" value="AT5G62290.1"/>
    <property type="gene ID" value="AT5G62290"/>
</dbReference>
<dbReference type="EnsemblPlants" id="AT5G62290.2">
    <molecule id="Q9LVA7-2"/>
    <property type="protein sequence ID" value="AT5G62290.2"/>
    <property type="gene ID" value="AT5G62290"/>
</dbReference>
<dbReference type="GeneID" id="836350"/>
<dbReference type="Gramene" id="AT5G62290.1">
    <molecule id="Q9LVA7-1"/>
    <property type="protein sequence ID" value="AT5G62290.1"/>
    <property type="gene ID" value="AT5G62290"/>
</dbReference>
<dbReference type="Gramene" id="AT5G62290.2">
    <molecule id="Q9LVA7-2"/>
    <property type="protein sequence ID" value="AT5G62290.2"/>
    <property type="gene ID" value="AT5G62290"/>
</dbReference>
<dbReference type="KEGG" id="ath:AT5G62290"/>
<dbReference type="Araport" id="AT5G62290"/>
<dbReference type="TAIR" id="AT5G62290"/>
<dbReference type="eggNOG" id="KOG3238">
    <property type="taxonomic scope" value="Eukaryota"/>
</dbReference>
<dbReference type="InParanoid" id="Q9LVA7"/>
<dbReference type="OMA" id="HNPANSI"/>
<dbReference type="OrthoDB" id="19714at2759"/>
<dbReference type="PhylomeDB" id="Q9LVA7"/>
<dbReference type="PRO" id="PR:Q9LVA7"/>
<dbReference type="Proteomes" id="UP000006548">
    <property type="component" value="Chromosome 5"/>
</dbReference>
<dbReference type="ExpressionAtlas" id="Q9LVA7">
    <property type="expression patterns" value="baseline and differential"/>
</dbReference>
<dbReference type="GO" id="GO:0005829">
    <property type="term" value="C:cytosol"/>
    <property type="evidence" value="ECO:0007669"/>
    <property type="project" value="InterPro"/>
</dbReference>
<dbReference type="GO" id="GO:0034709">
    <property type="term" value="C:methylosome"/>
    <property type="evidence" value="ECO:0007669"/>
    <property type="project" value="InterPro"/>
</dbReference>
<dbReference type="GO" id="GO:0005634">
    <property type="term" value="C:nucleus"/>
    <property type="evidence" value="ECO:0007669"/>
    <property type="project" value="UniProtKB-SubCell"/>
</dbReference>
<dbReference type="GO" id="GO:0034715">
    <property type="term" value="C:pICln-Sm protein complex"/>
    <property type="evidence" value="ECO:0007669"/>
    <property type="project" value="InterPro"/>
</dbReference>
<dbReference type="GO" id="GO:0005886">
    <property type="term" value="C:plasma membrane"/>
    <property type="evidence" value="ECO:0007669"/>
    <property type="project" value="InterPro"/>
</dbReference>
<dbReference type="GO" id="GO:0006884">
    <property type="term" value="P:cell volume homeostasis"/>
    <property type="evidence" value="ECO:0007669"/>
    <property type="project" value="InterPro"/>
</dbReference>
<dbReference type="GO" id="GO:0006821">
    <property type="term" value="P:chloride transport"/>
    <property type="evidence" value="ECO:0007669"/>
    <property type="project" value="InterPro"/>
</dbReference>
<dbReference type="GO" id="GO:0000387">
    <property type="term" value="P:spliceosomal snRNP assembly"/>
    <property type="evidence" value="ECO:0007669"/>
    <property type="project" value="InterPro"/>
</dbReference>
<dbReference type="Gene3D" id="2.30.29.30">
    <property type="entry name" value="Pleckstrin-homology domain (PH domain)/Phosphotyrosine-binding domain (PTB)"/>
    <property type="match status" value="1"/>
</dbReference>
<dbReference type="InterPro" id="IPR003521">
    <property type="entry name" value="ICln"/>
</dbReference>
<dbReference type="InterPro" id="IPR039924">
    <property type="entry name" value="ICln/Lot5/Saf5"/>
</dbReference>
<dbReference type="InterPro" id="IPR011993">
    <property type="entry name" value="PH-like_dom_sf"/>
</dbReference>
<dbReference type="PANTHER" id="PTHR21399">
    <property type="entry name" value="CHLORIDE CONDUCTANCE REGULATORY PROTEIN ICLN"/>
    <property type="match status" value="1"/>
</dbReference>
<dbReference type="PANTHER" id="PTHR21399:SF0">
    <property type="entry name" value="METHYLOSOME SUBUNIT PICLN"/>
    <property type="match status" value="1"/>
</dbReference>
<dbReference type="Pfam" id="PF03517">
    <property type="entry name" value="Voldacs"/>
    <property type="match status" value="1"/>
</dbReference>
<dbReference type="PRINTS" id="PR01348">
    <property type="entry name" value="ICLNCHANNEL"/>
</dbReference>
<proteinExistence type="evidence at transcript level"/>
<protein>
    <recommendedName>
        <fullName>Chloride conductance regulatory protein ICln</fullName>
        <shortName>I(Cln)</shortName>
    </recommendedName>
    <alternativeName>
        <fullName>Chloride ion current inducer protein</fullName>
        <shortName>ClCI</shortName>
    </alternativeName>
</protein>
<name>ICLN_ARATH</name>
<organism>
    <name type="scientific">Arabidopsis thaliana</name>
    <name type="common">Mouse-ear cress</name>
    <dbReference type="NCBI Taxonomy" id="3702"/>
    <lineage>
        <taxon>Eukaryota</taxon>
        <taxon>Viridiplantae</taxon>
        <taxon>Streptophyta</taxon>
        <taxon>Embryophyta</taxon>
        <taxon>Tracheophyta</taxon>
        <taxon>Spermatophyta</taxon>
        <taxon>Magnoliopsida</taxon>
        <taxon>eudicotyledons</taxon>
        <taxon>Gunneridae</taxon>
        <taxon>Pentapetalae</taxon>
        <taxon>rosids</taxon>
        <taxon>malvids</taxon>
        <taxon>Brassicales</taxon>
        <taxon>Brassicaceae</taxon>
        <taxon>Camelineae</taxon>
        <taxon>Arabidopsis</taxon>
    </lineage>
</organism>
<accession>Q9LVA7</accession>
<accession>B3H4U0</accession>
<keyword id="KW-0025">Alternative splicing</keyword>
<keyword id="KW-0963">Cytoplasm</keyword>
<keyword id="KW-0539">Nucleus</keyword>
<keyword id="KW-1185">Reference proteome</keyword>
<comment type="function">
    <text evidence="1">May participate in cellular volume control by activation of a swelling-induced chloride conductance pathway.</text>
</comment>
<comment type="subunit">
    <text evidence="1">Homooligomer.</text>
</comment>
<comment type="subcellular location">
    <subcellularLocation>
        <location evidence="1">Cytoplasm</location>
    </subcellularLocation>
    <subcellularLocation>
        <location evidence="1">Nucleus</location>
    </subcellularLocation>
</comment>
<comment type="alternative products">
    <event type="alternative splicing"/>
    <isoform>
        <id>Q9LVA7-1</id>
        <name>1</name>
        <sequence type="displayed"/>
    </isoform>
    <isoform>
        <id>Q9LVA7-2</id>
        <name>2</name>
        <sequence type="described" ref="VSP_042271"/>
    </isoform>
</comment>
<comment type="similarity">
    <text evidence="2">Belongs to the pICln (TC 1.A.47) family.</text>
</comment>
<sequence>MVAGLRDFTLRTEDGSGKPVLDESNGEELMHVQTSVAVALGNRPIESPGTLYITSRKLIWLSDVDMAKGYAVDFLSISLHAVSRDPEAYSSPCIYTQIEVEEDEDDESDSESTEVLDLSKIREMRLVPSDSTQLETLFDVFCECAELNPEPVQEEEEESGHNWVFSADQMDVRGGDDDAEWQISQSPTSVIGHSNGDEGLNQPMLELQINDQRFEDAEEMVHESETKDH</sequence>
<feature type="chain" id="PRO_0000415519" description="Chloride conductance regulatory protein ICln">
    <location>
        <begin position="1"/>
        <end position="229"/>
    </location>
</feature>
<feature type="splice variant" id="VSP_042271" description="In isoform 2." evidence="2">
    <location>
        <position position="154"/>
    </location>
</feature>
<gene>
    <name type="ordered locus">At5g62290</name>
    <name type="ORF">MMI9.12</name>
</gene>
<reference key="1">
    <citation type="journal article" date="2000" name="DNA Res.">
        <title>Structural analysis of Arabidopsis thaliana chromosome 5. X. Sequence features of the regions of 3,076,755 bp covered by sixty P1 and TAC clones.</title>
        <authorList>
            <person name="Sato S."/>
            <person name="Nakamura Y."/>
            <person name="Kaneko T."/>
            <person name="Katoh T."/>
            <person name="Asamizu E."/>
            <person name="Kotani H."/>
            <person name="Tabata S."/>
        </authorList>
    </citation>
    <scope>NUCLEOTIDE SEQUENCE [LARGE SCALE GENOMIC DNA]</scope>
    <source>
        <strain>cv. Columbia</strain>
    </source>
</reference>
<reference key="2">
    <citation type="journal article" date="2017" name="Plant J.">
        <title>Araport11: a complete reannotation of the Arabidopsis thaliana reference genome.</title>
        <authorList>
            <person name="Cheng C.Y."/>
            <person name="Krishnakumar V."/>
            <person name="Chan A.P."/>
            <person name="Thibaud-Nissen F."/>
            <person name="Schobel S."/>
            <person name="Town C.D."/>
        </authorList>
    </citation>
    <scope>GENOME REANNOTATION</scope>
    <source>
        <strain>cv. Columbia</strain>
    </source>
</reference>
<reference key="3">
    <citation type="journal article" date="2002" name="Science">
        <title>Functional annotation of a full-length Arabidopsis cDNA collection.</title>
        <authorList>
            <person name="Seki M."/>
            <person name="Narusaka M."/>
            <person name="Kamiya A."/>
            <person name="Ishida J."/>
            <person name="Satou M."/>
            <person name="Sakurai T."/>
            <person name="Nakajima M."/>
            <person name="Enju A."/>
            <person name="Akiyama K."/>
            <person name="Oono Y."/>
            <person name="Muramatsu M."/>
            <person name="Hayashizaki Y."/>
            <person name="Kawai J."/>
            <person name="Carninci P."/>
            <person name="Itoh M."/>
            <person name="Ishii Y."/>
            <person name="Arakawa T."/>
            <person name="Shibata K."/>
            <person name="Shinagawa A."/>
            <person name="Shinozaki K."/>
        </authorList>
    </citation>
    <scope>NUCLEOTIDE SEQUENCE [LARGE SCALE MRNA]</scope>
    <source>
        <strain>cv. Columbia</strain>
    </source>
</reference>
<reference key="4">
    <citation type="journal article" date="2003" name="Science">
        <title>Empirical analysis of transcriptional activity in the Arabidopsis genome.</title>
        <authorList>
            <person name="Yamada K."/>
            <person name="Lim J."/>
            <person name="Dale J.M."/>
            <person name="Chen H."/>
            <person name="Shinn P."/>
            <person name="Palm C.J."/>
            <person name="Southwick A.M."/>
            <person name="Wu H.C."/>
            <person name="Kim C.J."/>
            <person name="Nguyen M."/>
            <person name="Pham P.K."/>
            <person name="Cheuk R.F."/>
            <person name="Karlin-Newmann G."/>
            <person name="Liu S.X."/>
            <person name="Lam B."/>
            <person name="Sakano H."/>
            <person name="Wu T."/>
            <person name="Yu G."/>
            <person name="Miranda M."/>
            <person name="Quach H.L."/>
            <person name="Tripp M."/>
            <person name="Chang C.H."/>
            <person name="Lee J.M."/>
            <person name="Toriumi M.J."/>
            <person name="Chan M.M."/>
            <person name="Tang C.C."/>
            <person name="Onodera C.S."/>
            <person name="Deng J.M."/>
            <person name="Akiyama K."/>
            <person name="Ansari Y."/>
            <person name="Arakawa T."/>
            <person name="Banh J."/>
            <person name="Banno F."/>
            <person name="Bowser L."/>
            <person name="Brooks S.Y."/>
            <person name="Carninci P."/>
            <person name="Chao Q."/>
            <person name="Choy N."/>
            <person name="Enju A."/>
            <person name="Goldsmith A.D."/>
            <person name="Gurjal M."/>
            <person name="Hansen N.F."/>
            <person name="Hayashizaki Y."/>
            <person name="Johnson-Hopson C."/>
            <person name="Hsuan V.W."/>
            <person name="Iida K."/>
            <person name="Karnes M."/>
            <person name="Khan S."/>
            <person name="Koesema E."/>
            <person name="Ishida J."/>
            <person name="Jiang P.X."/>
            <person name="Jones T."/>
            <person name="Kawai J."/>
            <person name="Kamiya A."/>
            <person name="Meyers C."/>
            <person name="Nakajima M."/>
            <person name="Narusaka M."/>
            <person name="Seki M."/>
            <person name="Sakurai T."/>
            <person name="Satou M."/>
            <person name="Tamse R."/>
            <person name="Vaysberg M."/>
            <person name="Wallender E.K."/>
            <person name="Wong C."/>
            <person name="Yamamura Y."/>
            <person name="Yuan S."/>
            <person name="Shinozaki K."/>
            <person name="Davis R.W."/>
            <person name="Theologis A."/>
            <person name="Ecker J.R."/>
        </authorList>
    </citation>
    <scope>NUCLEOTIDE SEQUENCE [LARGE SCALE MRNA]</scope>
    <source>
        <strain>cv. Columbia</strain>
    </source>
</reference>
<reference key="5">
    <citation type="submission" date="2002-03" db="EMBL/GenBank/DDBJ databases">
        <title>Full-length cDNA from Arabidopsis thaliana.</title>
        <authorList>
            <person name="Brover V.V."/>
            <person name="Troukhan M.E."/>
            <person name="Alexandrov N.A."/>
            <person name="Lu Y.-P."/>
            <person name="Flavell R.B."/>
            <person name="Feldmann K.A."/>
        </authorList>
    </citation>
    <scope>NUCLEOTIDE SEQUENCE [LARGE SCALE MRNA]</scope>
</reference>
<evidence type="ECO:0000250" key="1"/>
<evidence type="ECO:0000305" key="2"/>